<proteinExistence type="inferred from homology"/>
<feature type="chain" id="PRO_0000103482" description="Dihydroxy-acid dehydratase">
    <location>
        <begin position="1"/>
        <end position="575"/>
    </location>
</feature>
<feature type="active site" description="Proton acceptor" evidence="1">
    <location>
        <position position="491"/>
    </location>
</feature>
<feature type="binding site" evidence="1">
    <location>
        <position position="64"/>
    </location>
    <ligand>
        <name>[2Fe-2S] cluster</name>
        <dbReference type="ChEBI" id="CHEBI:190135"/>
    </ligand>
</feature>
<feature type="binding site" evidence="1">
    <location>
        <position position="96"/>
    </location>
    <ligand>
        <name>Mg(2+)</name>
        <dbReference type="ChEBI" id="CHEBI:18420"/>
    </ligand>
</feature>
<feature type="binding site" evidence="1">
    <location>
        <position position="137"/>
    </location>
    <ligand>
        <name>[2Fe-2S] cluster</name>
        <dbReference type="ChEBI" id="CHEBI:190135"/>
    </ligand>
</feature>
<feature type="binding site" evidence="1">
    <location>
        <position position="138"/>
    </location>
    <ligand>
        <name>Mg(2+)</name>
        <dbReference type="ChEBI" id="CHEBI:18420"/>
    </ligand>
</feature>
<feature type="binding site" description="via carbamate group" evidence="1">
    <location>
        <position position="139"/>
    </location>
    <ligand>
        <name>Mg(2+)</name>
        <dbReference type="ChEBI" id="CHEBI:18420"/>
    </ligand>
</feature>
<feature type="binding site" evidence="1">
    <location>
        <position position="214"/>
    </location>
    <ligand>
        <name>[2Fe-2S] cluster</name>
        <dbReference type="ChEBI" id="CHEBI:190135"/>
    </ligand>
</feature>
<feature type="binding site" evidence="1">
    <location>
        <position position="465"/>
    </location>
    <ligand>
        <name>Mg(2+)</name>
        <dbReference type="ChEBI" id="CHEBI:18420"/>
    </ligand>
</feature>
<feature type="modified residue" description="N6-carboxylysine" evidence="1">
    <location>
        <position position="139"/>
    </location>
</feature>
<keyword id="KW-0001">2Fe-2S</keyword>
<keyword id="KW-0028">Amino-acid biosynthesis</keyword>
<keyword id="KW-0100">Branched-chain amino acid biosynthesis</keyword>
<keyword id="KW-0408">Iron</keyword>
<keyword id="KW-0411">Iron-sulfur</keyword>
<keyword id="KW-0456">Lyase</keyword>
<keyword id="KW-0460">Magnesium</keyword>
<keyword id="KW-0479">Metal-binding</keyword>
<keyword id="KW-1185">Reference proteome</keyword>
<organism>
    <name type="scientific">Mycobacterium bovis (strain ATCC BAA-935 / AF2122/97)</name>
    <dbReference type="NCBI Taxonomy" id="233413"/>
    <lineage>
        <taxon>Bacteria</taxon>
        <taxon>Bacillati</taxon>
        <taxon>Actinomycetota</taxon>
        <taxon>Actinomycetes</taxon>
        <taxon>Mycobacteriales</taxon>
        <taxon>Mycobacteriaceae</taxon>
        <taxon>Mycobacterium</taxon>
        <taxon>Mycobacterium tuberculosis complex</taxon>
    </lineage>
</organism>
<reference key="1">
    <citation type="journal article" date="2003" name="Proc. Natl. Acad. Sci. U.S.A.">
        <title>The complete genome sequence of Mycobacterium bovis.</title>
        <authorList>
            <person name="Garnier T."/>
            <person name="Eiglmeier K."/>
            <person name="Camus J.-C."/>
            <person name="Medina N."/>
            <person name="Mansoor H."/>
            <person name="Pryor M."/>
            <person name="Duthoy S."/>
            <person name="Grondin S."/>
            <person name="Lacroix C."/>
            <person name="Monsempe C."/>
            <person name="Simon S."/>
            <person name="Harris B."/>
            <person name="Atkin R."/>
            <person name="Doggett J."/>
            <person name="Mayes R."/>
            <person name="Keating L."/>
            <person name="Wheeler P.R."/>
            <person name="Parkhill J."/>
            <person name="Barrell B.G."/>
            <person name="Cole S.T."/>
            <person name="Gordon S.V."/>
            <person name="Hewinson R.G."/>
        </authorList>
    </citation>
    <scope>NUCLEOTIDE SEQUENCE [LARGE SCALE GENOMIC DNA]</scope>
    <source>
        <strain>ATCC BAA-935 / AF2122/97</strain>
    </source>
</reference>
<reference key="2">
    <citation type="journal article" date="2017" name="Genome Announc.">
        <title>Updated reference genome sequence and annotation of Mycobacterium bovis AF2122/97.</title>
        <authorList>
            <person name="Malone K.M."/>
            <person name="Farrell D."/>
            <person name="Stuber T.P."/>
            <person name="Schubert O.T."/>
            <person name="Aebersold R."/>
            <person name="Robbe-Austerman S."/>
            <person name="Gordon S.V."/>
        </authorList>
    </citation>
    <scope>NUCLEOTIDE SEQUENCE [LARGE SCALE GENOMIC DNA]</scope>
    <scope>GENOME REANNOTATION</scope>
    <source>
        <strain>ATCC BAA-935 / AF2122/97</strain>
    </source>
</reference>
<evidence type="ECO:0000255" key="1">
    <source>
        <dbReference type="HAMAP-Rule" id="MF_00012"/>
    </source>
</evidence>
<gene>
    <name evidence="1" type="primary">ilvD</name>
    <name type="ordered locus">BQ2027_MB0195C</name>
</gene>
<comment type="function">
    <text evidence="1">Functions in the biosynthesis of branched-chain amino acids. Catalyzes the dehydration of (2R,3R)-2,3-dihydroxy-3-methylpentanoate (2,3-dihydroxy-3-methylvalerate) into 2-oxo-3-methylpentanoate (2-oxo-3-methylvalerate) and of (2R)-2,3-dihydroxy-3-methylbutanoate (2,3-dihydroxyisovalerate) into 2-oxo-3-methylbutanoate (2-oxoisovalerate), the penultimate precursor to L-isoleucine and L-valine, respectively.</text>
</comment>
<comment type="catalytic activity">
    <reaction evidence="1">
        <text>(2R)-2,3-dihydroxy-3-methylbutanoate = 3-methyl-2-oxobutanoate + H2O</text>
        <dbReference type="Rhea" id="RHEA:24809"/>
        <dbReference type="ChEBI" id="CHEBI:11851"/>
        <dbReference type="ChEBI" id="CHEBI:15377"/>
        <dbReference type="ChEBI" id="CHEBI:49072"/>
        <dbReference type="EC" id="4.2.1.9"/>
    </reaction>
    <physiologicalReaction direction="left-to-right" evidence="1">
        <dbReference type="Rhea" id="RHEA:24810"/>
    </physiologicalReaction>
</comment>
<comment type="catalytic activity">
    <reaction evidence="1">
        <text>(2R,3R)-2,3-dihydroxy-3-methylpentanoate = (S)-3-methyl-2-oxopentanoate + H2O</text>
        <dbReference type="Rhea" id="RHEA:27694"/>
        <dbReference type="ChEBI" id="CHEBI:15377"/>
        <dbReference type="ChEBI" id="CHEBI:35146"/>
        <dbReference type="ChEBI" id="CHEBI:49258"/>
        <dbReference type="EC" id="4.2.1.9"/>
    </reaction>
    <physiologicalReaction direction="left-to-right" evidence="1">
        <dbReference type="Rhea" id="RHEA:27695"/>
    </physiologicalReaction>
</comment>
<comment type="cofactor">
    <cofactor evidence="1">
        <name>[2Fe-2S] cluster</name>
        <dbReference type="ChEBI" id="CHEBI:190135"/>
    </cofactor>
    <text evidence="1">Binds 1 [2Fe-2S] cluster per subunit. This cluster acts as a Lewis acid cofactor.</text>
</comment>
<comment type="cofactor">
    <cofactor evidence="1">
        <name>Mg(2+)</name>
        <dbReference type="ChEBI" id="CHEBI:18420"/>
    </cofactor>
</comment>
<comment type="pathway">
    <text evidence="1">Amino-acid biosynthesis; L-isoleucine biosynthesis; L-isoleucine from 2-oxobutanoate: step 3/4.</text>
</comment>
<comment type="pathway">
    <text evidence="1">Amino-acid biosynthesis; L-valine biosynthesis; L-valine from pyruvate: step 3/4.</text>
</comment>
<comment type="subunit">
    <text evidence="1">Homodimer.</text>
</comment>
<comment type="similarity">
    <text evidence="1">Belongs to the IlvD/Edd family.</text>
</comment>
<dbReference type="EC" id="4.2.1.9" evidence="1"/>
<dbReference type="EMBL" id="LT708304">
    <property type="protein sequence ID" value="SIT98665.1"/>
    <property type="molecule type" value="Genomic_DNA"/>
</dbReference>
<dbReference type="RefSeq" id="NP_853860.1">
    <property type="nucleotide sequence ID" value="NC_002945.3"/>
</dbReference>
<dbReference type="RefSeq" id="WP_003900824.1">
    <property type="nucleotide sequence ID" value="NC_002945.4"/>
</dbReference>
<dbReference type="SMR" id="P65155"/>
<dbReference type="PATRIC" id="fig|233413.5.peg.220"/>
<dbReference type="UniPathway" id="UPA00047">
    <property type="reaction ID" value="UER00057"/>
</dbReference>
<dbReference type="UniPathway" id="UPA00049">
    <property type="reaction ID" value="UER00061"/>
</dbReference>
<dbReference type="Proteomes" id="UP000001419">
    <property type="component" value="Chromosome"/>
</dbReference>
<dbReference type="GO" id="GO:0051537">
    <property type="term" value="F:2 iron, 2 sulfur cluster binding"/>
    <property type="evidence" value="ECO:0007669"/>
    <property type="project" value="UniProtKB-UniRule"/>
</dbReference>
<dbReference type="GO" id="GO:0004160">
    <property type="term" value="F:dihydroxy-acid dehydratase activity"/>
    <property type="evidence" value="ECO:0007669"/>
    <property type="project" value="UniProtKB-UniRule"/>
</dbReference>
<dbReference type="GO" id="GO:0000287">
    <property type="term" value="F:magnesium ion binding"/>
    <property type="evidence" value="ECO:0007669"/>
    <property type="project" value="UniProtKB-UniRule"/>
</dbReference>
<dbReference type="GO" id="GO:0009097">
    <property type="term" value="P:isoleucine biosynthetic process"/>
    <property type="evidence" value="ECO:0007669"/>
    <property type="project" value="UniProtKB-UniRule"/>
</dbReference>
<dbReference type="GO" id="GO:0009099">
    <property type="term" value="P:L-valine biosynthetic process"/>
    <property type="evidence" value="ECO:0007669"/>
    <property type="project" value="UniProtKB-UniRule"/>
</dbReference>
<dbReference type="FunFam" id="3.50.30.80:FF:000001">
    <property type="entry name" value="Dihydroxy-acid dehydratase"/>
    <property type="match status" value="1"/>
</dbReference>
<dbReference type="Gene3D" id="3.50.30.80">
    <property type="entry name" value="IlvD/EDD C-terminal domain-like"/>
    <property type="match status" value="1"/>
</dbReference>
<dbReference type="HAMAP" id="MF_00012">
    <property type="entry name" value="IlvD"/>
    <property type="match status" value="1"/>
</dbReference>
<dbReference type="InterPro" id="IPR050165">
    <property type="entry name" value="DHAD_IlvD/Edd"/>
</dbReference>
<dbReference type="InterPro" id="IPR042096">
    <property type="entry name" value="Dihydro-acid_dehy_C"/>
</dbReference>
<dbReference type="InterPro" id="IPR004404">
    <property type="entry name" value="DihydroxyA_deHydtase"/>
</dbReference>
<dbReference type="InterPro" id="IPR020558">
    <property type="entry name" value="DiOHA_6PGluconate_deHydtase_CS"/>
</dbReference>
<dbReference type="InterPro" id="IPR056740">
    <property type="entry name" value="ILV_EDD_C"/>
</dbReference>
<dbReference type="InterPro" id="IPR000581">
    <property type="entry name" value="ILV_EDD_N"/>
</dbReference>
<dbReference type="InterPro" id="IPR037237">
    <property type="entry name" value="IlvD/EDD_N"/>
</dbReference>
<dbReference type="NCBIfam" id="TIGR00110">
    <property type="entry name" value="ilvD"/>
    <property type="match status" value="1"/>
</dbReference>
<dbReference type="NCBIfam" id="NF002068">
    <property type="entry name" value="PRK00911.1"/>
    <property type="match status" value="1"/>
</dbReference>
<dbReference type="PANTHER" id="PTHR21000">
    <property type="entry name" value="DIHYDROXY-ACID DEHYDRATASE DAD"/>
    <property type="match status" value="1"/>
</dbReference>
<dbReference type="PANTHER" id="PTHR21000:SF5">
    <property type="entry name" value="DIHYDROXY-ACID DEHYDRATASE, MITOCHONDRIAL"/>
    <property type="match status" value="1"/>
</dbReference>
<dbReference type="Pfam" id="PF24877">
    <property type="entry name" value="ILV_EDD_C"/>
    <property type="match status" value="1"/>
</dbReference>
<dbReference type="Pfam" id="PF00920">
    <property type="entry name" value="ILVD_EDD_N"/>
    <property type="match status" value="1"/>
</dbReference>
<dbReference type="SUPFAM" id="SSF143975">
    <property type="entry name" value="IlvD/EDD N-terminal domain-like"/>
    <property type="match status" value="1"/>
</dbReference>
<dbReference type="SUPFAM" id="SSF52016">
    <property type="entry name" value="LeuD/IlvD-like"/>
    <property type="match status" value="1"/>
</dbReference>
<dbReference type="PROSITE" id="PS00886">
    <property type="entry name" value="ILVD_EDD_1"/>
    <property type="match status" value="1"/>
</dbReference>
<dbReference type="PROSITE" id="PS00887">
    <property type="entry name" value="ILVD_EDD_2"/>
    <property type="match status" value="1"/>
</dbReference>
<protein>
    <recommendedName>
        <fullName evidence="1">Dihydroxy-acid dehydratase</fullName>
        <shortName evidence="1">DAD</shortName>
        <ecNumber evidence="1">4.2.1.9</ecNumber>
    </recommendedName>
</protein>
<name>ILVD_MYCBO</name>
<accession>P65155</accession>
<accession>A0A1R3XUN0</accession>
<accession>O07433</accession>
<accession>X2BEA6</accession>
<sequence length="575" mass="59352">MPQTTDEAASVSTVADIKPRSRDVTDGLEKAAARGMLRAVGMDDEDFAKPQIGVASSWNEITPCNLSLDRLANAVKEGVFSAGGYPLEFGTISVSDGISMGHEGMHFSLVSREVIADSVEVVMQAERLDGSVLLAGCDKSLPGMLMAAARLDLAAVFLYAGSILPGRAKLSDGSERDVTIIDAFEAVGACSRGLMSRADVDAIERAICPGEGACGGMYTANTMASAAEALGMSLPGSAAPPATDRRRDGFARRSGQAVVELLRRGITARDILTKEAFENAIAVVMAFGGSTNAVLHLLAIAHEANVALSLQDFSRIGSGVPHLADVKPFGRHVMSDVDHIGGVPVVMKALLDAGLLHGDCLTVTGHTMAENLAAITPPDPDGKVLRALANPIHPSGGITILHGSLAPEGAVVKTAGFDSDVFEGTARVFDGERAALDALEDGTITVGDAVVIRYEGPKGGPGMREMLAITGAIKGAGLGKDVLLLTDGRFSGGTTGLCVGHIAPEAVDGGPIALLRNGDRIRLDVAGRVLDVLADPAEFASRQQDFSPPPPRYTTGVLSKYVKLVSSAAVGAVCG</sequence>